<sequence>MKETIISSMEKFIQKFFEELYLILFDYALKIAQNPIDELLIFGSIAIAYTVIYISGLFFARKINLPYIRKILEIGISVIFYFLVSLLEGKFPQVESLLLLKTLFLVQTIRVFILSLEAFQAFGFTTKLLINIFSILGGISFFIIKLSPFTRRKI</sequence>
<evidence type="ECO:0000255" key="1"/>
<evidence type="ECO:0000305" key="2"/>
<dbReference type="EMBL" id="AE000657">
    <property type="protein sequence ID" value="AAC07089.1"/>
    <property type="molecule type" value="Genomic_DNA"/>
</dbReference>
<dbReference type="PIR" id="D70387">
    <property type="entry name" value="D70387"/>
</dbReference>
<dbReference type="RefSeq" id="NP_213690.1">
    <property type="nucleotide sequence ID" value="NC_000918.1"/>
</dbReference>
<dbReference type="STRING" id="224324.aq_1012"/>
<dbReference type="EnsemblBacteria" id="AAC07089">
    <property type="protein sequence ID" value="AAC07089"/>
    <property type="gene ID" value="aq_1012"/>
</dbReference>
<dbReference type="KEGG" id="aae:aq_1012"/>
<dbReference type="HOGENOM" id="CLU_1700599_0_0_0"/>
<dbReference type="InParanoid" id="O67127"/>
<dbReference type="Proteomes" id="UP000000798">
    <property type="component" value="Chromosome"/>
</dbReference>
<dbReference type="GO" id="GO:0005886">
    <property type="term" value="C:plasma membrane"/>
    <property type="evidence" value="ECO:0007669"/>
    <property type="project" value="UniProtKB-SubCell"/>
</dbReference>
<organism>
    <name type="scientific">Aquifex aeolicus (strain VF5)</name>
    <dbReference type="NCBI Taxonomy" id="224324"/>
    <lineage>
        <taxon>Bacteria</taxon>
        <taxon>Pseudomonadati</taxon>
        <taxon>Aquificota</taxon>
        <taxon>Aquificia</taxon>
        <taxon>Aquificales</taxon>
        <taxon>Aquificaceae</taxon>
        <taxon>Aquifex</taxon>
    </lineage>
</organism>
<reference key="1">
    <citation type="journal article" date="1998" name="Nature">
        <title>The complete genome of the hyperthermophilic bacterium Aquifex aeolicus.</title>
        <authorList>
            <person name="Deckert G."/>
            <person name="Warren P.V."/>
            <person name="Gaasterland T."/>
            <person name="Young W.G."/>
            <person name="Lenox A.L."/>
            <person name="Graham D.E."/>
            <person name="Overbeek R."/>
            <person name="Snead M.A."/>
            <person name="Keller M."/>
            <person name="Aujay M."/>
            <person name="Huber R."/>
            <person name="Feldman R.A."/>
            <person name="Short J.M."/>
            <person name="Olsen G.J."/>
            <person name="Swanson R.V."/>
        </authorList>
    </citation>
    <scope>NUCLEOTIDE SEQUENCE [LARGE SCALE GENOMIC DNA]</scope>
    <source>
        <strain>VF5</strain>
    </source>
</reference>
<protein>
    <recommendedName>
        <fullName>Uncharacterized protein aq_1012</fullName>
    </recommendedName>
</protein>
<proteinExistence type="predicted"/>
<accession>O67127</accession>
<feature type="chain" id="PRO_0000186893" description="Uncharacterized protein aq_1012">
    <location>
        <begin position="1"/>
        <end position="154"/>
    </location>
</feature>
<feature type="transmembrane region" description="Helical" evidence="1">
    <location>
        <begin position="39"/>
        <end position="61"/>
    </location>
</feature>
<feature type="transmembrane region" description="Helical" evidence="1">
    <location>
        <begin position="65"/>
        <end position="87"/>
    </location>
</feature>
<feature type="transmembrane region" description="Helical" evidence="1">
    <location>
        <begin position="94"/>
        <end position="113"/>
    </location>
</feature>
<feature type="transmembrane region" description="Helical" evidence="1">
    <location>
        <begin position="128"/>
        <end position="150"/>
    </location>
</feature>
<gene>
    <name type="ordered locus">aq_1012</name>
</gene>
<name>Y1012_AQUAE</name>
<keyword id="KW-1003">Cell membrane</keyword>
<keyword id="KW-0472">Membrane</keyword>
<keyword id="KW-1185">Reference proteome</keyword>
<keyword id="KW-0812">Transmembrane</keyword>
<keyword id="KW-1133">Transmembrane helix</keyword>
<comment type="subcellular location">
    <subcellularLocation>
        <location evidence="2">Cell membrane</location>
        <topology evidence="2">Multi-pass membrane protein</topology>
    </subcellularLocation>
</comment>